<name>OMT1_CARIP</name>
<gene>
    <name evidence="3" type="primary">OMT1</name>
</gene>
<protein>
    <recommendedName>
        <fullName evidence="3">Cephaeline 6'-O-methyltransferase IpeOMT1</fullName>
        <shortName evidence="3">Emetine synthase IpeOMT1</shortName>
        <ecNumber evidence="2">2.1.1.396</ecNumber>
    </recommendedName>
    <alternativeName>
        <fullName evidence="3">(R,S)-norcoclaurine 6-O-methyltransferase IpeOMT1</fullName>
        <shortName evidence="3">Coclaurine synthase IpeOMT1</shortName>
        <ecNumber evidence="2">2.1.1.128</ecNumber>
    </alternativeName>
    <alternativeName>
        <fullName evidence="3">(R,S)-norprotosinomenine 6-O-methyltransferase IpeOMT1</fullName>
        <ecNumber evidence="2">2.1.1.-</ecNumber>
    </alternativeName>
    <alternativeName>
        <fullName evidence="3">7-O-methyl-N-deacetylisoipecoside 6-O-methyltransferase IpeOMT1</fullName>
        <ecNumber evidence="2">2.1.1.-</ecNumber>
    </alternativeName>
    <alternativeName>
        <fullName evidence="3">Ipecac/benzylisoquinoline alkaloid O-methyltransferase 1</fullName>
        <shortName evidence="3 4">IpeOMT1</shortName>
        <ecNumber evidence="2">2.1.1.-</ecNumber>
    </alternativeName>
    <alternativeName>
        <fullName evidence="3">Isococlaurine 6-O-methyltransferase IpeOMT1</fullName>
        <ecNumber evidence="2">2.1.1.-</ecNumber>
    </alternativeName>
    <alternativeName>
        <fullName evidence="3">N-deacetylisoipecoside 6-O-methyltransferase IpeOMT1</fullName>
        <ecNumber evidence="2">2.1.1.-</ecNumber>
    </alternativeName>
</protein>
<evidence type="ECO:0000255" key="1">
    <source>
        <dbReference type="PROSITE-ProRule" id="PRU01020"/>
    </source>
</evidence>
<evidence type="ECO:0000269" key="2">
    <source>
    </source>
</evidence>
<evidence type="ECO:0000303" key="3">
    <source>
    </source>
</evidence>
<evidence type="ECO:0000312" key="4">
    <source>
        <dbReference type="EMBL" id="BAI79243.1"/>
    </source>
</evidence>
<organism>
    <name type="scientific">Carapichea ipecacuanha</name>
    <name type="common">Ipecac</name>
    <name type="synonym">Callicocca ipecacuanha</name>
    <dbReference type="NCBI Taxonomy" id="77880"/>
    <lineage>
        <taxon>Eukaryota</taxon>
        <taxon>Viridiplantae</taxon>
        <taxon>Streptophyta</taxon>
        <taxon>Embryophyta</taxon>
        <taxon>Tracheophyta</taxon>
        <taxon>Spermatophyta</taxon>
        <taxon>Magnoliopsida</taxon>
        <taxon>eudicotyledons</taxon>
        <taxon>Gunneridae</taxon>
        <taxon>Pentapetalae</taxon>
        <taxon>asterids</taxon>
        <taxon>lamiids</taxon>
        <taxon>Gentianales</taxon>
        <taxon>Rubiaceae</taxon>
        <taxon>Rubioideae</taxon>
        <taxon>Palicoureeae</taxon>
        <taxon>Carapichea</taxon>
    </lineage>
</organism>
<reference evidence="4" key="1">
    <citation type="journal article" date="2010" name="J. Biol. Chem.">
        <title>Three new O-methyltransferases are sufficient for all O-methylation reactions of ipecac alkaloid biosynthesis in root culture of Psychotria ipecacuanha.</title>
        <authorList>
            <person name="Nomura T."/>
            <person name="Kutchan T.M."/>
        </authorList>
    </citation>
    <scope>NUCLEOTIDE SEQUENCE [MRNA]</scope>
    <scope>FUNCTION</scope>
    <scope>CATALYTIC ACTIVITY</scope>
    <scope>BIOPHYSICOCHEMICAL PROPERTIES</scope>
    <scope>SUBCELLULAR LOCATION</scope>
    <scope>PATHWAY</scope>
    <scope>TISSUE SPECIFICITY</scope>
    <source>
        <tissue>Root</tissue>
    </source>
</reference>
<comment type="function">
    <text evidence="2">O-methyltransferase involved in the biosynthesis of ipecac and benzylisoquinoline monoterpenoid-isoquinoline alkaloids natural products, starting by the condensation of dopamine and secologanin, and including emetine and cephaeline, drugs used both as anti-protozoal (e.g. treatment of ameobiasis) and as emetic agents (PubMed:20061395). Mediates cephaeline 6'-O-methylation to produce emetine (PubMed:20061395). Catalyzes the 6-O-methylation of N-deacetylisoipecoside, 7-O-methyl-N-deacetylisoipecoside, isococlaurine, norcoclaurine, (S)-norprotosinomenine and (R)-norprotosinomenine, and, with a lower efficiency, of 4'-O-methyllaudanosoline, isoorientaline and protosinomenine (PubMed:20061395). Supports also the 4'-O-methylation of nororientaline (PubMed:20061395).</text>
</comment>
<comment type="catalytic activity">
    <reaction evidence="2">
        <text>cephaeline + S-adenosyl-L-methionine = emetine + S-adenosyl-L-homocysteine + H(+)</text>
        <dbReference type="Rhea" id="RHEA:80659"/>
        <dbReference type="ChEBI" id="CHEBI:15378"/>
        <dbReference type="ChEBI" id="CHEBI:57856"/>
        <dbReference type="ChEBI" id="CHEBI:59789"/>
        <dbReference type="ChEBI" id="CHEBI:149548"/>
        <dbReference type="ChEBI" id="CHEBI:231587"/>
        <dbReference type="EC" id="2.1.1.396"/>
    </reaction>
    <physiologicalReaction direction="left-to-right" evidence="2">
        <dbReference type="Rhea" id="RHEA:80660"/>
    </physiologicalReaction>
</comment>
<comment type="catalytic activity">
    <reaction evidence="2">
        <text>deacetylisoipecoside + S-adenosyl-L-methionine = 6-O-methyldeacetylisoipecoside + S-adenosyl-L-homocysteine + H(+)</text>
        <dbReference type="Rhea" id="RHEA:80663"/>
        <dbReference type="ChEBI" id="CHEBI:15378"/>
        <dbReference type="ChEBI" id="CHEBI:57856"/>
        <dbReference type="ChEBI" id="CHEBI:58091"/>
        <dbReference type="ChEBI" id="CHEBI:59789"/>
        <dbReference type="ChEBI" id="CHEBI:229555"/>
    </reaction>
    <physiologicalReaction direction="left-to-right" evidence="2">
        <dbReference type="Rhea" id="RHEA:80664"/>
    </physiologicalReaction>
</comment>
<comment type="catalytic activity">
    <reaction evidence="2">
        <text>7-O-methyldeacetylisoipecoside + S-adenosyl-L-methionine = 6,7-O,O-dimethyldeacetylisoipecoside + S-adenosyl-L-homocysteine + H(+)</text>
        <dbReference type="Rhea" id="RHEA:80667"/>
        <dbReference type="ChEBI" id="CHEBI:15378"/>
        <dbReference type="ChEBI" id="CHEBI:57856"/>
        <dbReference type="ChEBI" id="CHEBI:59789"/>
        <dbReference type="ChEBI" id="CHEBI:231626"/>
        <dbReference type="ChEBI" id="CHEBI:231627"/>
    </reaction>
    <physiologicalReaction direction="left-to-right" evidence="2">
        <dbReference type="Rhea" id="RHEA:80668"/>
    </physiologicalReaction>
</comment>
<comment type="catalytic activity">
    <reaction evidence="2">
        <text>norcoclaurine + S-adenosyl-L-methionine = coclaurine + S-adenosyl-L-homocysteine + H(+)</text>
        <dbReference type="Rhea" id="RHEA:19941"/>
        <dbReference type="ChEBI" id="CHEBI:15378"/>
        <dbReference type="ChEBI" id="CHEBI:57856"/>
        <dbReference type="ChEBI" id="CHEBI:58481"/>
        <dbReference type="ChEBI" id="CHEBI:58482"/>
        <dbReference type="ChEBI" id="CHEBI:59789"/>
        <dbReference type="EC" id="2.1.1.128"/>
    </reaction>
    <physiologicalReaction direction="left-to-right" evidence="2">
        <dbReference type="Rhea" id="RHEA:19942"/>
    </physiologicalReaction>
</comment>
<comment type="catalytic activity">
    <reaction evidence="2">
        <text>(S)-norprotosinomenine + S-adenosyl-L-methionine = (S)-6-O-methylnorprotosinomenine + S-adenosyl-L-homocysteine + H(+)</text>
        <dbReference type="Rhea" id="RHEA:80695"/>
        <dbReference type="ChEBI" id="CHEBI:15378"/>
        <dbReference type="ChEBI" id="CHEBI:57856"/>
        <dbReference type="ChEBI" id="CHEBI:59789"/>
        <dbReference type="ChEBI" id="CHEBI:231630"/>
        <dbReference type="ChEBI" id="CHEBI:231632"/>
    </reaction>
    <physiologicalReaction direction="left-to-right" evidence="2">
        <dbReference type="Rhea" id="RHEA:80696"/>
    </physiologicalReaction>
</comment>
<comment type="catalytic activity">
    <reaction evidence="2">
        <text>(R)-norprotosinomenine + S-adenosyl-L-methionine = (R)-6-O-methylnorprotosinomenine + S-adenosyl-L-homocysteine + H(+)</text>
        <dbReference type="Rhea" id="RHEA:80699"/>
        <dbReference type="ChEBI" id="CHEBI:15378"/>
        <dbReference type="ChEBI" id="CHEBI:57856"/>
        <dbReference type="ChEBI" id="CHEBI:59789"/>
        <dbReference type="ChEBI" id="CHEBI:231631"/>
        <dbReference type="ChEBI" id="CHEBI:231633"/>
    </reaction>
    <physiologicalReaction direction="left-to-right" evidence="2">
        <dbReference type="Rhea" id="RHEA:80700"/>
    </physiologicalReaction>
</comment>
<comment type="biophysicochemical properties">
    <kinetics>
        <KM evidence="2">107 uM for N-deacetylisoipecoside</KM>
        <KM evidence="2">105 uM for 7-O-methyl-N-deacetylisoipecoside</KM>
        <KM evidence="2">80 uM for cephaeline</KM>
        <KM evidence="2">42 uM for S-adenosyl-L-methionine</KM>
        <Vmax evidence="2">16.6 nmol/min/mg enzyme with N-deacetylisoipecoside as substrate</Vmax>
        <Vmax evidence="2">30.0 nmol/min/mg enzyme with 7-O-methyl-N-deacetylisoipecoside as substrate</Vmax>
        <Vmax evidence="2">0.41 nmol/min/mg enzyme with cephaeline as substrate</Vmax>
        <Vmax evidence="2">10.5 nmol/min/mg enzyme with S-adenosyl-L-methionine as substrate</Vmax>
        <text evidence="2">kcat is 11.3x10(-3) sec(-1) with N-deacetylisoipecoside as substrate (PubMed:20061395). kcat is 20.4x10(-3) sec(-1) with 7-O-methyl-N-deacetylisoipecoside as substrate (PubMed:20061395). kcat is 0.28x10(-3) sec(-1) with cephaeline as substrate (PubMed:20061395). kcat is 7.1x10(-3) sec(-1) with S-adenosyl-L-methionine as substrate (PubMed:20061395).</text>
    </kinetics>
    <phDependence>
        <text evidence="2">Optimum pH is 8 with N-deacetylisoipecoside as substrate.</text>
    </phDependence>
    <temperatureDependence>
        <text evidence="2">Optimum temperature is 40 degrees Celsius with N-deacetylisoipecoside as substrate.</text>
    </temperatureDependence>
</comment>
<comment type="pathway">
    <text evidence="2">Alkaloid biosynthesis.</text>
</comment>
<comment type="subcellular location">
    <subcellularLocation>
        <location evidence="2">Cytoplasm</location>
        <location evidence="2">Cytosol</location>
    </subcellularLocation>
</comment>
<comment type="tissue specificity">
    <text evidence="2">Expressed in roots.</text>
</comment>
<comment type="similarity">
    <text evidence="1">Belongs to the class I-like SAM-binding methyltransferase superfamily. Cation-independent O-methyltransferase family.</text>
</comment>
<keyword id="KW-0017">Alkaloid metabolism</keyword>
<keyword id="KW-0963">Cytoplasm</keyword>
<keyword id="KW-0489">Methyltransferase</keyword>
<keyword id="KW-0949">S-adenosyl-L-methionine</keyword>
<keyword id="KW-0808">Transferase</keyword>
<dbReference type="EC" id="2.1.1.396" evidence="2"/>
<dbReference type="EC" id="2.1.1.128" evidence="2"/>
<dbReference type="EC" id="2.1.1.-" evidence="2"/>
<dbReference type="EMBL" id="AB527082">
    <property type="protein sequence ID" value="BAI79243.1"/>
    <property type="molecule type" value="mRNA"/>
</dbReference>
<dbReference type="KEGG" id="ag:BAI79243"/>
<dbReference type="BioCyc" id="MetaCyc:MONOMER-17755"/>
<dbReference type="BRENDA" id="2.1.1.B84">
    <property type="organism ID" value="11125"/>
</dbReference>
<dbReference type="GO" id="GO:0005829">
    <property type="term" value="C:cytosol"/>
    <property type="evidence" value="ECO:0000314"/>
    <property type="project" value="UniProtKB"/>
</dbReference>
<dbReference type="GO" id="GO:0008171">
    <property type="term" value="F:O-methyltransferase activity"/>
    <property type="evidence" value="ECO:0000314"/>
    <property type="project" value="UniProtKB"/>
</dbReference>
<dbReference type="GO" id="GO:0046983">
    <property type="term" value="F:protein dimerization activity"/>
    <property type="evidence" value="ECO:0007669"/>
    <property type="project" value="InterPro"/>
</dbReference>
<dbReference type="GO" id="GO:0033075">
    <property type="term" value="P:isoquinoline alkaloid biosynthetic process"/>
    <property type="evidence" value="ECO:0000314"/>
    <property type="project" value="UniProtKB"/>
</dbReference>
<dbReference type="GO" id="GO:0032259">
    <property type="term" value="P:methylation"/>
    <property type="evidence" value="ECO:0000314"/>
    <property type="project" value="UniProtKB"/>
</dbReference>
<dbReference type="CDD" id="cd02440">
    <property type="entry name" value="AdoMet_MTases"/>
    <property type="match status" value="1"/>
</dbReference>
<dbReference type="FunFam" id="3.40.50.150:FF:000206">
    <property type="entry name" value="O-methyltransferase ZRP4"/>
    <property type="match status" value="1"/>
</dbReference>
<dbReference type="Gene3D" id="3.40.50.150">
    <property type="entry name" value="Vaccinia Virus protein VP39"/>
    <property type="match status" value="1"/>
</dbReference>
<dbReference type="Gene3D" id="1.10.10.10">
    <property type="entry name" value="Winged helix-like DNA-binding domain superfamily/Winged helix DNA-binding domain"/>
    <property type="match status" value="1"/>
</dbReference>
<dbReference type="InterPro" id="IPR016461">
    <property type="entry name" value="COMT-like"/>
</dbReference>
<dbReference type="InterPro" id="IPR001077">
    <property type="entry name" value="O_MeTrfase_dom"/>
</dbReference>
<dbReference type="InterPro" id="IPR012967">
    <property type="entry name" value="Plant_O-MeTrfase_dimerisation"/>
</dbReference>
<dbReference type="InterPro" id="IPR029063">
    <property type="entry name" value="SAM-dependent_MTases_sf"/>
</dbReference>
<dbReference type="InterPro" id="IPR036388">
    <property type="entry name" value="WH-like_DNA-bd_sf"/>
</dbReference>
<dbReference type="InterPro" id="IPR036390">
    <property type="entry name" value="WH_DNA-bd_sf"/>
</dbReference>
<dbReference type="PANTHER" id="PTHR11746">
    <property type="entry name" value="O-METHYLTRANSFERASE"/>
    <property type="match status" value="1"/>
</dbReference>
<dbReference type="Pfam" id="PF08100">
    <property type="entry name" value="Dimerisation"/>
    <property type="match status" value="1"/>
</dbReference>
<dbReference type="Pfam" id="PF00891">
    <property type="entry name" value="Methyltransf_2"/>
    <property type="match status" value="1"/>
</dbReference>
<dbReference type="PIRSF" id="PIRSF005739">
    <property type="entry name" value="O-mtase"/>
    <property type="match status" value="1"/>
</dbReference>
<dbReference type="SUPFAM" id="SSF53335">
    <property type="entry name" value="S-adenosyl-L-methionine-dependent methyltransferases"/>
    <property type="match status" value="1"/>
</dbReference>
<dbReference type="SUPFAM" id="SSF46785">
    <property type="entry name" value="Winged helix' DNA-binding domain"/>
    <property type="match status" value="1"/>
</dbReference>
<dbReference type="PROSITE" id="PS51683">
    <property type="entry name" value="SAM_OMT_II"/>
    <property type="match status" value="1"/>
</dbReference>
<feature type="chain" id="PRO_0000462198" description="Cephaeline 6'-O-methyltransferase IpeOMT1">
    <location>
        <begin position="1"/>
        <end position="350"/>
    </location>
</feature>
<feature type="active site" description="Proton acceptor" evidence="1">
    <location>
        <position position="254"/>
    </location>
</feature>
<feature type="binding site" evidence="1">
    <location>
        <position position="193"/>
    </location>
    <ligand>
        <name>S-adenosyl-L-methionine</name>
        <dbReference type="ChEBI" id="CHEBI:59789"/>
    </ligand>
</feature>
<feature type="binding site" evidence="1">
    <location>
        <position position="216"/>
    </location>
    <ligand>
        <name>S-adenosyl-L-methionine</name>
        <dbReference type="ChEBI" id="CHEBI:59789"/>
    </ligand>
</feature>
<feature type="binding site" evidence="1">
    <location>
        <position position="236"/>
    </location>
    <ligand>
        <name>S-adenosyl-L-methionine</name>
        <dbReference type="ChEBI" id="CHEBI:59789"/>
    </ligand>
</feature>
<feature type="binding site" evidence="1">
    <location>
        <position position="237"/>
    </location>
    <ligand>
        <name>S-adenosyl-L-methionine</name>
        <dbReference type="ChEBI" id="CHEBI:59789"/>
    </ligand>
</feature>
<feature type="binding site" evidence="1">
    <location>
        <position position="250"/>
    </location>
    <ligand>
        <name>S-adenosyl-L-methionine</name>
        <dbReference type="ChEBI" id="CHEBI:59789"/>
    </ligand>
</feature>
<accession>D3KY98</accession>
<sequence>METVESSSSAELLRAQTHFSRQVFSFQNFAALKCALQLGIPDAIKQHGKPMNLSELTSALPINPSKAPCIHRLMRLLVNAGYFAQENECFALTSLGRLLLKDDPLHIRALVLSEFHTALVMPWFALSEWFKNDDVAPFATAHGKSFWDYTSCDPELRNVFDGAMACDSHLIAKALVTEFKYLFEGLKSLVDVGGGNGTLARSIAKAFTNLKCTVCDLPEAVANEQGDGNLDFVAGDMFDRVPSADAILLKSILHDWSDENCVKILKNCKRAISGKDKGGKVIVIDGVVELQKKAGNDDPGLDNMDMQMLVLFNSKERNEKEWAKLFSDAGFSDYGIVRTFGWWCIMELSP</sequence>
<proteinExistence type="evidence at protein level"/>